<name>MIK1_SCHPO</name>
<dbReference type="EC" id="2.7.11.1"/>
<dbReference type="EMBL" id="M60834">
    <property type="protein sequence ID" value="AAA91278.1"/>
    <property type="molecule type" value="Genomic_DNA"/>
</dbReference>
<dbReference type="EMBL" id="CU329671">
    <property type="protein sequence ID" value="CAA22534.1"/>
    <property type="molecule type" value="Genomic_DNA"/>
</dbReference>
<dbReference type="PIR" id="A37913">
    <property type="entry name" value="A37913"/>
</dbReference>
<dbReference type="RefSeq" id="NP_595093.1">
    <property type="nucleotide sequence ID" value="NM_001021000.2"/>
</dbReference>
<dbReference type="SMR" id="P30290"/>
<dbReference type="BioGRID" id="277402">
    <property type="interactions" value="61"/>
</dbReference>
<dbReference type="FunCoup" id="P30290">
    <property type="interactions" value="172"/>
</dbReference>
<dbReference type="STRING" id="284812.P30290"/>
<dbReference type="iPTMnet" id="P30290"/>
<dbReference type="PaxDb" id="4896-SPBC660.14.1"/>
<dbReference type="EnsemblFungi" id="SPBC660.14.1">
    <property type="protein sequence ID" value="SPBC660.14.1:pep"/>
    <property type="gene ID" value="SPBC660.14"/>
</dbReference>
<dbReference type="GeneID" id="2540885"/>
<dbReference type="KEGG" id="spo:2540885"/>
<dbReference type="PomBase" id="SPBC660.14">
    <property type="gene designation" value="mik1"/>
</dbReference>
<dbReference type="VEuPathDB" id="FungiDB:SPBC660.14"/>
<dbReference type="eggNOG" id="KOG0601">
    <property type="taxonomic scope" value="Eukaryota"/>
</dbReference>
<dbReference type="HOGENOM" id="CLU_468646_0_0_1"/>
<dbReference type="InParanoid" id="P30290"/>
<dbReference type="OMA" id="EQPHTPC"/>
<dbReference type="PhylomeDB" id="P30290"/>
<dbReference type="Reactome" id="R-SPO-156711">
    <property type="pathway name" value="Polo-like kinase mediated events"/>
</dbReference>
<dbReference type="Reactome" id="R-SPO-69656">
    <property type="pathway name" value="Cyclin A:Cdk2-associated events at S phase entry"/>
</dbReference>
<dbReference type="PRO" id="PR:P30290"/>
<dbReference type="Proteomes" id="UP000002485">
    <property type="component" value="Chromosome II"/>
</dbReference>
<dbReference type="GO" id="GO:0005737">
    <property type="term" value="C:cytoplasm"/>
    <property type="evidence" value="ECO:0000318"/>
    <property type="project" value="GO_Central"/>
</dbReference>
<dbReference type="GO" id="GO:0005829">
    <property type="term" value="C:cytosol"/>
    <property type="evidence" value="ECO:0007005"/>
    <property type="project" value="PomBase"/>
</dbReference>
<dbReference type="GO" id="GO:0005634">
    <property type="term" value="C:nucleus"/>
    <property type="evidence" value="ECO:0007005"/>
    <property type="project" value="PomBase"/>
</dbReference>
<dbReference type="GO" id="GO:0005524">
    <property type="term" value="F:ATP binding"/>
    <property type="evidence" value="ECO:0007669"/>
    <property type="project" value="UniProtKB-KW"/>
</dbReference>
<dbReference type="GO" id="GO:0046872">
    <property type="term" value="F:metal ion binding"/>
    <property type="evidence" value="ECO:0007669"/>
    <property type="project" value="UniProtKB-KW"/>
</dbReference>
<dbReference type="GO" id="GO:0106310">
    <property type="term" value="F:protein serine kinase activity"/>
    <property type="evidence" value="ECO:0007669"/>
    <property type="project" value="RHEA"/>
</dbReference>
<dbReference type="GO" id="GO:0004674">
    <property type="term" value="F:protein serine/threonine kinase activity"/>
    <property type="evidence" value="ECO:0007669"/>
    <property type="project" value="UniProtKB-KW"/>
</dbReference>
<dbReference type="GO" id="GO:0004713">
    <property type="term" value="F:protein tyrosine kinase activity"/>
    <property type="evidence" value="ECO:0000314"/>
    <property type="project" value="PomBase"/>
</dbReference>
<dbReference type="GO" id="GO:0051301">
    <property type="term" value="P:cell division"/>
    <property type="evidence" value="ECO:0007669"/>
    <property type="project" value="UniProtKB-KW"/>
</dbReference>
<dbReference type="GO" id="GO:0010972">
    <property type="term" value="P:negative regulation of G2/M transition of mitotic cell cycle"/>
    <property type="evidence" value="ECO:0000316"/>
    <property type="project" value="PomBase"/>
</dbReference>
<dbReference type="GO" id="GO:0110031">
    <property type="term" value="P:negative regulation of G2/MI transition of meiotic cell cycle"/>
    <property type="evidence" value="ECO:0000315"/>
    <property type="project" value="PomBase"/>
</dbReference>
<dbReference type="GO" id="GO:0023052">
    <property type="term" value="P:signaling"/>
    <property type="evidence" value="ECO:0000303"/>
    <property type="project" value="PomBase"/>
</dbReference>
<dbReference type="CDD" id="cd14052">
    <property type="entry name" value="PTKc_Wee1_fungi"/>
    <property type="match status" value="1"/>
</dbReference>
<dbReference type="Gene3D" id="3.30.200.20">
    <property type="entry name" value="Phosphorylase Kinase, domain 1"/>
    <property type="match status" value="1"/>
</dbReference>
<dbReference type="Gene3D" id="1.10.510.10">
    <property type="entry name" value="Transferase(Phosphotransferase) domain 1"/>
    <property type="match status" value="1"/>
</dbReference>
<dbReference type="InterPro" id="IPR050339">
    <property type="entry name" value="CC_SR_Kinase"/>
</dbReference>
<dbReference type="InterPro" id="IPR011009">
    <property type="entry name" value="Kinase-like_dom_sf"/>
</dbReference>
<dbReference type="InterPro" id="IPR000719">
    <property type="entry name" value="Prot_kinase_dom"/>
</dbReference>
<dbReference type="InterPro" id="IPR008271">
    <property type="entry name" value="Ser/Thr_kinase_AS"/>
</dbReference>
<dbReference type="PANTHER" id="PTHR11042">
    <property type="entry name" value="EUKARYOTIC TRANSLATION INITIATION FACTOR 2-ALPHA KINASE EIF2-ALPHA KINASE -RELATED"/>
    <property type="match status" value="1"/>
</dbReference>
<dbReference type="PANTHER" id="PTHR11042:SF190">
    <property type="entry name" value="MITOSIS INHIBITOR PROTEIN KINASE MIK1"/>
    <property type="match status" value="1"/>
</dbReference>
<dbReference type="Pfam" id="PF00069">
    <property type="entry name" value="Pkinase"/>
    <property type="match status" value="1"/>
</dbReference>
<dbReference type="SMART" id="SM00220">
    <property type="entry name" value="S_TKc"/>
    <property type="match status" value="1"/>
</dbReference>
<dbReference type="SUPFAM" id="SSF56112">
    <property type="entry name" value="Protein kinase-like (PK-like)"/>
    <property type="match status" value="1"/>
</dbReference>
<dbReference type="PROSITE" id="PS50011">
    <property type="entry name" value="PROTEIN_KINASE_DOM"/>
    <property type="match status" value="1"/>
</dbReference>
<dbReference type="PROSITE" id="PS00108">
    <property type="entry name" value="PROTEIN_KINASE_ST"/>
    <property type="match status" value="1"/>
</dbReference>
<evidence type="ECO:0000250" key="1"/>
<evidence type="ECO:0000255" key="2">
    <source>
        <dbReference type="PROSITE-ProRule" id="PRU00159"/>
    </source>
</evidence>
<evidence type="ECO:0000255" key="3">
    <source>
        <dbReference type="PROSITE-ProRule" id="PRU10027"/>
    </source>
</evidence>
<evidence type="ECO:0000256" key="4">
    <source>
        <dbReference type="SAM" id="MobiDB-lite"/>
    </source>
</evidence>
<feature type="chain" id="PRO_0000086327" description="Mitosis inhibitor protein kinase mik1">
    <location>
        <begin position="1"/>
        <end position="581"/>
    </location>
</feature>
<feature type="domain" description="Protein kinase" evidence="2">
    <location>
        <begin position="289"/>
        <end position="561"/>
    </location>
</feature>
<feature type="region of interest" description="Disordered" evidence="4">
    <location>
        <begin position="43"/>
        <end position="71"/>
    </location>
</feature>
<feature type="region of interest" description="Disordered" evidence="4">
    <location>
        <begin position="148"/>
        <end position="178"/>
    </location>
</feature>
<feature type="compositionally biased region" description="Polar residues" evidence="4">
    <location>
        <begin position="59"/>
        <end position="71"/>
    </location>
</feature>
<feature type="compositionally biased region" description="Basic residues" evidence="4">
    <location>
        <begin position="160"/>
        <end position="169"/>
    </location>
</feature>
<feature type="active site" description="Proton acceptor" evidence="2 3">
    <location>
        <position position="417"/>
    </location>
</feature>
<feature type="binding site" evidence="2">
    <location>
        <begin position="295"/>
        <end position="303"/>
    </location>
    <ligand>
        <name>ATP</name>
        <dbReference type="ChEBI" id="CHEBI:30616"/>
    </ligand>
</feature>
<feature type="binding site" evidence="2">
    <location>
        <position position="320"/>
    </location>
    <ligand>
        <name>ATP</name>
        <dbReference type="ChEBI" id="CHEBI:30616"/>
    </ligand>
</feature>
<feature type="binding site" evidence="1">
    <location>
        <position position="422"/>
    </location>
    <ligand>
        <name>Mg(2+)</name>
        <dbReference type="ChEBI" id="CHEBI:18420"/>
    </ligand>
</feature>
<feature type="binding site" evidence="1">
    <location>
        <position position="435"/>
    </location>
    <ligand>
        <name>Mg(2+)</name>
        <dbReference type="ChEBI" id="CHEBI:18420"/>
    </ligand>
</feature>
<proteinExistence type="inferred from homology"/>
<gene>
    <name type="primary">mik1</name>
    <name type="ORF">SPBC660.14</name>
</gene>
<reference key="1">
    <citation type="journal article" date="1991" name="Cell">
        <title>mik1 and wee1 cooperate in the inhibitory tyrosine phosphorylation of cdc2.</title>
        <authorList>
            <person name="Lundgren K."/>
            <person name="Walworth N."/>
            <person name="Booher R."/>
            <person name="Dembski M."/>
            <person name="Kirschner M."/>
            <person name="Beach D."/>
        </authorList>
    </citation>
    <scope>NUCLEOTIDE SEQUENCE [GENOMIC DNA]</scope>
</reference>
<reference key="2">
    <citation type="journal article" date="2002" name="Nature">
        <title>The genome sequence of Schizosaccharomyces pombe.</title>
        <authorList>
            <person name="Wood V."/>
            <person name="Gwilliam R."/>
            <person name="Rajandream M.A."/>
            <person name="Lyne M.H."/>
            <person name="Lyne R."/>
            <person name="Stewart A."/>
            <person name="Sgouros J.G."/>
            <person name="Peat N."/>
            <person name="Hayles J."/>
            <person name="Baker S.G."/>
            <person name="Basham D."/>
            <person name="Bowman S."/>
            <person name="Brooks K."/>
            <person name="Brown D."/>
            <person name="Brown S."/>
            <person name="Chillingworth T."/>
            <person name="Churcher C.M."/>
            <person name="Collins M."/>
            <person name="Connor R."/>
            <person name="Cronin A."/>
            <person name="Davis P."/>
            <person name="Feltwell T."/>
            <person name="Fraser A."/>
            <person name="Gentles S."/>
            <person name="Goble A."/>
            <person name="Hamlin N."/>
            <person name="Harris D.E."/>
            <person name="Hidalgo J."/>
            <person name="Hodgson G."/>
            <person name="Holroyd S."/>
            <person name="Hornsby T."/>
            <person name="Howarth S."/>
            <person name="Huckle E.J."/>
            <person name="Hunt S."/>
            <person name="Jagels K."/>
            <person name="James K.D."/>
            <person name="Jones L."/>
            <person name="Jones M."/>
            <person name="Leather S."/>
            <person name="McDonald S."/>
            <person name="McLean J."/>
            <person name="Mooney P."/>
            <person name="Moule S."/>
            <person name="Mungall K.L."/>
            <person name="Murphy L.D."/>
            <person name="Niblett D."/>
            <person name="Odell C."/>
            <person name="Oliver K."/>
            <person name="O'Neil S."/>
            <person name="Pearson D."/>
            <person name="Quail M.A."/>
            <person name="Rabbinowitsch E."/>
            <person name="Rutherford K.M."/>
            <person name="Rutter S."/>
            <person name="Saunders D."/>
            <person name="Seeger K."/>
            <person name="Sharp S."/>
            <person name="Skelton J."/>
            <person name="Simmonds M.N."/>
            <person name="Squares R."/>
            <person name="Squares S."/>
            <person name="Stevens K."/>
            <person name="Taylor K."/>
            <person name="Taylor R.G."/>
            <person name="Tivey A."/>
            <person name="Walsh S.V."/>
            <person name="Warren T."/>
            <person name="Whitehead S."/>
            <person name="Woodward J.R."/>
            <person name="Volckaert G."/>
            <person name="Aert R."/>
            <person name="Robben J."/>
            <person name="Grymonprez B."/>
            <person name="Weltjens I."/>
            <person name="Vanstreels E."/>
            <person name="Rieger M."/>
            <person name="Schaefer M."/>
            <person name="Mueller-Auer S."/>
            <person name="Gabel C."/>
            <person name="Fuchs M."/>
            <person name="Duesterhoeft A."/>
            <person name="Fritzc C."/>
            <person name="Holzer E."/>
            <person name="Moestl D."/>
            <person name="Hilbert H."/>
            <person name="Borzym K."/>
            <person name="Langer I."/>
            <person name="Beck A."/>
            <person name="Lehrach H."/>
            <person name="Reinhardt R."/>
            <person name="Pohl T.M."/>
            <person name="Eger P."/>
            <person name="Zimmermann W."/>
            <person name="Wedler H."/>
            <person name="Wambutt R."/>
            <person name="Purnelle B."/>
            <person name="Goffeau A."/>
            <person name="Cadieu E."/>
            <person name="Dreano S."/>
            <person name="Gloux S."/>
            <person name="Lelaure V."/>
            <person name="Mottier S."/>
            <person name="Galibert F."/>
            <person name="Aves S.J."/>
            <person name="Xiang Z."/>
            <person name="Hunt C."/>
            <person name="Moore K."/>
            <person name="Hurst S.M."/>
            <person name="Lucas M."/>
            <person name="Rochet M."/>
            <person name="Gaillardin C."/>
            <person name="Tallada V.A."/>
            <person name="Garzon A."/>
            <person name="Thode G."/>
            <person name="Daga R.R."/>
            <person name="Cruzado L."/>
            <person name="Jimenez J."/>
            <person name="Sanchez M."/>
            <person name="del Rey F."/>
            <person name="Benito J."/>
            <person name="Dominguez A."/>
            <person name="Revuelta J.L."/>
            <person name="Moreno S."/>
            <person name="Armstrong J."/>
            <person name="Forsburg S.L."/>
            <person name="Cerutti L."/>
            <person name="Lowe T."/>
            <person name="McCombie W.R."/>
            <person name="Paulsen I."/>
            <person name="Potashkin J."/>
            <person name="Shpakovski G.V."/>
            <person name="Ussery D."/>
            <person name="Barrell B.G."/>
            <person name="Nurse P."/>
        </authorList>
    </citation>
    <scope>NUCLEOTIDE SEQUENCE [LARGE SCALE GENOMIC DNA]</scope>
    <source>
        <strain>972 / ATCC 24843</strain>
    </source>
</reference>
<sequence length="581" mass="65934">MDSSTTIPITPTRTPCFFNISSSFNEHSPLNFYDEPIYNFSSGHEENQSHKSSKLTFFKPSNTKRSPHTPMQNNAKAIRLSTTVRHGIFKNSDLDGCSKPFAFSSGLKLSKKIVDASTPIDLKRKRAVTSLSTGLLSKREKWSLWEGNLTNPRSEQPHTPCKKGTKIKLKPPQSPLSPTTSLLARKCKHIDLDTFSRLDHPNSDSSDETFEMEELPSLSYGSEDLLEFCETPCKSQPIFLSSSHVNNWDEKDVPSSLSWTPTSPIFLNINSADDYEEEEDWTSDLRIRFQQVKPIHESDFSFVYHVSSINPPTETVYVVKMLKKNAAKFTGKERHLQEVSILQRLQACPFVVNLVNVWSYNDNIFLQLDYCENGDLSLFLSELGLLQVMDPFRVWKMLFQLTQALNFIHLLEFVHLDVKPSNVLITRDGNLKLGDFGLATSLPVSSMVDLEGDRVYIAPEILASHNYGKPADVYSLGLSMIEAATNVVLPENGVEWQRLRSGDYSNLPNLKDLLLSKEKVQINKVRCAESLQCLLQRMTHPYVDCRPTTQDLLAMPEMIFISEHSQKAAIIYEDHNSWLET</sequence>
<keyword id="KW-0067">ATP-binding</keyword>
<keyword id="KW-0131">Cell cycle</keyword>
<keyword id="KW-0132">Cell division</keyword>
<keyword id="KW-0418">Kinase</keyword>
<keyword id="KW-0460">Magnesium</keyword>
<keyword id="KW-0479">Metal-binding</keyword>
<keyword id="KW-0498">Mitosis</keyword>
<keyword id="KW-0547">Nucleotide-binding</keyword>
<keyword id="KW-1185">Reference proteome</keyword>
<keyword id="KW-0723">Serine/threonine-protein kinase</keyword>
<keyword id="KW-0808">Transferase</keyword>
<keyword id="KW-0829">Tyrosine-protein kinase</keyword>
<accession>P30290</accession>
<organism>
    <name type="scientific">Schizosaccharomyces pombe (strain 972 / ATCC 24843)</name>
    <name type="common">Fission yeast</name>
    <dbReference type="NCBI Taxonomy" id="284812"/>
    <lineage>
        <taxon>Eukaryota</taxon>
        <taxon>Fungi</taxon>
        <taxon>Dikarya</taxon>
        <taxon>Ascomycota</taxon>
        <taxon>Taphrinomycotina</taxon>
        <taxon>Schizosaccharomycetes</taxon>
        <taxon>Schizosaccharomycetales</taxon>
        <taxon>Schizosaccharomycetaceae</taxon>
        <taxon>Schizosaccharomyces</taxon>
    </lineage>
</organism>
<comment type="function">
    <text>Protein kinase that acts both on serines and on tyrosines. It acts as a negative regulator of entry into mitosis (G2 to M transition). Phosphorylates and inhibits cdc2.</text>
</comment>
<comment type="catalytic activity">
    <reaction>
        <text>L-seryl-[protein] + ATP = O-phospho-L-seryl-[protein] + ADP + H(+)</text>
        <dbReference type="Rhea" id="RHEA:17989"/>
        <dbReference type="Rhea" id="RHEA-COMP:9863"/>
        <dbReference type="Rhea" id="RHEA-COMP:11604"/>
        <dbReference type="ChEBI" id="CHEBI:15378"/>
        <dbReference type="ChEBI" id="CHEBI:29999"/>
        <dbReference type="ChEBI" id="CHEBI:30616"/>
        <dbReference type="ChEBI" id="CHEBI:83421"/>
        <dbReference type="ChEBI" id="CHEBI:456216"/>
        <dbReference type="EC" id="2.7.11.1"/>
    </reaction>
</comment>
<comment type="catalytic activity">
    <reaction>
        <text>L-threonyl-[protein] + ATP = O-phospho-L-threonyl-[protein] + ADP + H(+)</text>
        <dbReference type="Rhea" id="RHEA:46608"/>
        <dbReference type="Rhea" id="RHEA-COMP:11060"/>
        <dbReference type="Rhea" id="RHEA-COMP:11605"/>
        <dbReference type="ChEBI" id="CHEBI:15378"/>
        <dbReference type="ChEBI" id="CHEBI:30013"/>
        <dbReference type="ChEBI" id="CHEBI:30616"/>
        <dbReference type="ChEBI" id="CHEBI:61977"/>
        <dbReference type="ChEBI" id="CHEBI:456216"/>
        <dbReference type="EC" id="2.7.11.1"/>
    </reaction>
</comment>
<comment type="similarity">
    <text evidence="2">Belongs to the protein kinase superfamily. Ser/Thr protein kinase family. WEE1 subfamily.</text>
</comment>
<protein>
    <recommendedName>
        <fullName>Mitosis inhibitor protein kinase mik1</fullName>
        <ecNumber>2.7.11.1</ecNumber>
    </recommendedName>
</protein>